<reference key="1">
    <citation type="journal article" date="1988" name="EMBO J.">
        <title>Four mating-type genes control sexual differentiation in the fission yeast.</title>
        <authorList>
            <person name="Kelly M."/>
            <person name="Burke J."/>
            <person name="Smith M."/>
            <person name="Klar A."/>
            <person name="Beach D."/>
        </authorList>
    </citation>
    <scope>NUCLEOTIDE SEQUENCE [GENOMIC DNA]</scope>
    <scope>FUNCTION</scope>
    <scope>INDUCTION</scope>
    <source>
        <strain>h90</strain>
    </source>
</reference>
<reference key="2">
    <citation type="submission" date="2009-08" db="EMBL/GenBank/DDBJ databases">
        <authorList>
            <consortium name="The Schizosaccharomyces pombe Genome Sequencing Consortium"/>
            <person name="Wood V."/>
        </authorList>
    </citation>
    <scope>NUCLEOTIDE SEQUENCE [GENOMIC DNA]</scope>
    <source>
        <strain>h90</strain>
    </source>
</reference>
<reference key="3">
    <citation type="journal article" date="1993" name="J. Biol. Chem.">
        <title>The Schizosaccharomyces pombe mating-type gene mat-Mc encodes a sequence-specific DNA-binding high mobility group box protein.</title>
        <authorList>
            <person name="Dooijes D."/>
            <person name="van de Wetering M."/>
            <person name="Knippels L."/>
            <person name="Clevers H."/>
        </authorList>
    </citation>
    <scope>NUCLEOTIDE SEQUENCE [GENOMIC DNA] OF 100-181</scope>
    <scope>FUNCTION</scope>
</reference>
<accession>C7U331</accession>
<accession>P10840</accession>
<accession>Q9URE7</accession>
<name>MATMC_SCHPM</name>
<sequence>MDSHQELSAGSPISYDFLDPDWCFKRYLTKDALHSIETGKGAAYFVPDGFTPILIPNSQSYLLDGNSAQLPRPQPISFTLDQCKVPGYILKSLRKDTTSTERTPRPPNAFILYRKEKHATLLKSNPSINNSQVSKLVGEMWRNESKEVRMRYFKMSEFYKAQHQKMYPGYKYQPRKNKVKR</sequence>
<evidence type="ECO:0000250" key="1"/>
<evidence type="ECO:0000255" key="2">
    <source>
        <dbReference type="PROSITE-ProRule" id="PRU00267"/>
    </source>
</evidence>
<evidence type="ECO:0000269" key="3">
    <source>
    </source>
</evidence>
<evidence type="ECO:0000269" key="4">
    <source>
    </source>
</evidence>
<evidence type="ECO:0000305" key="5"/>
<gene>
    <name type="primary">mat3-Mc</name>
    <name type="synonym">matMc</name>
    <name type="ORF">SPMTR.04</name>
</gene>
<dbReference type="EMBL" id="X07642">
    <property type="protein sequence ID" value="CAA30481.1"/>
    <property type="molecule type" value="Genomic_DNA"/>
</dbReference>
<dbReference type="EMBL" id="FP565355">
    <property type="protein sequence ID" value="CBB12357.1"/>
    <property type="molecule type" value="Genomic_DNA"/>
</dbReference>
<dbReference type="RefSeq" id="NP_595867.1">
    <property type="nucleotide sequence ID" value="NM_001021773.2"/>
</dbReference>
<dbReference type="RefSeq" id="NP_595875.1">
    <property type="nucleotide sequence ID" value="NM_001021781.1"/>
</dbReference>
<dbReference type="SMR" id="C7U331"/>
<dbReference type="EnsemblFungi" id="SPBC1711.02.1">
    <property type="protein sequence ID" value="SPBC1711.02.1:pep"/>
    <property type="gene ID" value="SPBC1711.02"/>
</dbReference>
<dbReference type="EnsemblFungi" id="SPBC23G7.09.1">
    <property type="protein sequence ID" value="SPBC23G7.09.1:pep"/>
    <property type="gene ID" value="SPBC23G7.09"/>
</dbReference>
<dbReference type="EnsemblFungi" id="SPMTR.04.1">
    <property type="protein sequence ID" value="SPMTR.04.1:pep"/>
    <property type="gene ID" value="SPMTR.04"/>
</dbReference>
<dbReference type="GeneID" id="2539619"/>
<dbReference type="GeneID" id="2540048"/>
<dbReference type="KEGG" id="spo:2539619"/>
<dbReference type="KEGG" id="spo:2540048"/>
<dbReference type="PomBase" id="SPMTR.04">
    <property type="gene designation" value="mat3-Mc"/>
</dbReference>
<dbReference type="VEuPathDB" id="FungiDB:SPBC1711.02"/>
<dbReference type="HOGENOM" id="CLU_128900_0_0_1"/>
<dbReference type="OrthoDB" id="6247875at2759"/>
<dbReference type="GO" id="GO:0005737">
    <property type="term" value="C:cytoplasm"/>
    <property type="evidence" value="ECO:0007669"/>
    <property type="project" value="UniProtKB-KW"/>
</dbReference>
<dbReference type="GO" id="GO:0005634">
    <property type="term" value="C:nucleus"/>
    <property type="evidence" value="ECO:0007669"/>
    <property type="project" value="UniProtKB-SubCell"/>
</dbReference>
<dbReference type="GO" id="GO:0005816">
    <property type="term" value="C:spindle pole body"/>
    <property type="evidence" value="ECO:0007669"/>
    <property type="project" value="UniProtKB-SubCell"/>
</dbReference>
<dbReference type="GO" id="GO:0001228">
    <property type="term" value="F:DNA-binding transcription activator activity, RNA polymerase II-specific"/>
    <property type="evidence" value="ECO:0007669"/>
    <property type="project" value="TreeGrafter"/>
</dbReference>
<dbReference type="GO" id="GO:0000978">
    <property type="term" value="F:RNA polymerase II cis-regulatory region sequence-specific DNA binding"/>
    <property type="evidence" value="ECO:0007669"/>
    <property type="project" value="TreeGrafter"/>
</dbReference>
<dbReference type="GO" id="GO:0030154">
    <property type="term" value="P:cell differentiation"/>
    <property type="evidence" value="ECO:0007669"/>
    <property type="project" value="TreeGrafter"/>
</dbReference>
<dbReference type="CDD" id="cd01389">
    <property type="entry name" value="HMG-box_ROX1-like"/>
    <property type="match status" value="1"/>
</dbReference>
<dbReference type="FunFam" id="1.10.30.10:FF:000041">
    <property type="entry name" value="HMG box family protein"/>
    <property type="match status" value="1"/>
</dbReference>
<dbReference type="Gene3D" id="1.10.30.10">
    <property type="entry name" value="High mobility group box domain"/>
    <property type="match status" value="1"/>
</dbReference>
<dbReference type="InterPro" id="IPR009071">
    <property type="entry name" value="HMG_box_dom"/>
</dbReference>
<dbReference type="InterPro" id="IPR036910">
    <property type="entry name" value="HMG_box_dom_sf"/>
</dbReference>
<dbReference type="InterPro" id="IPR050140">
    <property type="entry name" value="SRY-related_HMG-box_TF-like"/>
</dbReference>
<dbReference type="PANTHER" id="PTHR10270:SF161">
    <property type="entry name" value="SEX-DETERMINING REGION Y PROTEIN"/>
    <property type="match status" value="1"/>
</dbReference>
<dbReference type="PANTHER" id="PTHR10270">
    <property type="entry name" value="SOX TRANSCRIPTION FACTOR"/>
    <property type="match status" value="1"/>
</dbReference>
<dbReference type="Pfam" id="PF00505">
    <property type="entry name" value="HMG_box"/>
    <property type="match status" value="1"/>
</dbReference>
<dbReference type="SMART" id="SM00398">
    <property type="entry name" value="HMG"/>
    <property type="match status" value="1"/>
</dbReference>
<dbReference type="SUPFAM" id="SSF47095">
    <property type="entry name" value="HMG-box"/>
    <property type="match status" value="1"/>
</dbReference>
<dbReference type="PROSITE" id="PS50118">
    <property type="entry name" value="HMG_BOX_2"/>
    <property type="match status" value="1"/>
</dbReference>
<comment type="function">
    <text evidence="3 4">Mating type proteins are sequence specific DNA-binding proteins that act as master switches in yeast differentiation by controlling gene expression in a cell type-specific fashion. Positive regulator of MFM genes. The HMG box recognizes the DNA sequence 5'-AACAAAG-3'. Required for conjugation and efficient meiosis.</text>
</comment>
<comment type="subcellular location">
    <subcellularLocation>
        <location evidence="2">Nucleus</location>
    </subcellularLocation>
    <subcellularLocation>
        <location evidence="1">Cytoplasm</location>
        <location evidence="1">Cytoskeleton</location>
        <location evidence="1">Microtubule organizing center</location>
        <location evidence="1">Spindle pole body</location>
    </subcellularLocation>
</comment>
<comment type="induction">
    <text evidence="3">By nitrogen starvation.</text>
</comment>
<comment type="miscellaneous">
    <text>There are three genetic loci for mating type genes in S.pombe, mat1, mat2-P and mat3-M. Cell type is determined by the alternate allele present in mat1, either P (plus) in a h+ or M (minus) in a h- cell. Mat2-P and mat3-M serve as donor of information that is transposed to mat1 during a switch of mating type.</text>
</comment>
<feature type="chain" id="PRO_0000410975" description="Mating-type M-specific polypeptide Mc">
    <location>
        <begin position="1"/>
        <end position="181"/>
    </location>
</feature>
<feature type="DNA-binding region" description="HMG box" evidence="2">
    <location>
        <begin position="103"/>
        <end position="171"/>
    </location>
</feature>
<feature type="sequence conflict" description="In Ref. 3." evidence="5" ref="3">
    <location>
        <position position="174"/>
    </location>
</feature>
<protein>
    <recommendedName>
        <fullName>Mating-type M-specific polypeptide Mc</fullName>
        <shortName>mat-Mc</shortName>
    </recommendedName>
</protein>
<organism>
    <name type="scientific">Schizosaccharomyces pombe</name>
    <name type="common">Fission yeast</name>
    <dbReference type="NCBI Taxonomy" id="4896"/>
    <lineage>
        <taxon>Eukaryota</taxon>
        <taxon>Fungi</taxon>
        <taxon>Dikarya</taxon>
        <taxon>Ascomycota</taxon>
        <taxon>Taphrinomycotina</taxon>
        <taxon>Schizosaccharomycetes</taxon>
        <taxon>Schizosaccharomycetales</taxon>
        <taxon>Schizosaccharomycetaceae</taxon>
        <taxon>Schizosaccharomyces</taxon>
    </lineage>
</organism>
<proteinExistence type="evidence at transcript level"/>
<keyword id="KW-0963">Cytoplasm</keyword>
<keyword id="KW-0206">Cytoskeleton</keyword>
<keyword id="KW-0238">DNA-binding</keyword>
<keyword id="KW-0539">Nucleus</keyword>
<keyword id="KW-0346">Stress response</keyword>
<keyword id="KW-0804">Transcription</keyword>
<keyword id="KW-0805">Transcription regulation</keyword>